<keyword id="KW-1185">Reference proteome</keyword>
<name>Y2_SOCMV</name>
<sequence>MSRLEKIYTNKENPLKDFLDEVEQNDEEMRTVDFNPNKPALPYKKKAIVFPKNFPSETHYNNGVPIGKQLNLGGSVQQVIGGINTILEVLSFLCLRQLPIVASSSHEQLENSKEFKNELQNHLTKITEQLEINRKSIIKDQTVKEDLNKKQYETLYALQEKLLNMLAEKQSSNELKNLERRLDEKIKIIEQQLSEIKLMLS</sequence>
<dbReference type="EMBL" id="X15828">
    <property type="protein sequence ID" value="CAC16942.1"/>
    <property type="molecule type" value="Genomic_DNA"/>
</dbReference>
<dbReference type="PIR" id="JS0372">
    <property type="entry name" value="JS0372"/>
</dbReference>
<dbReference type="SMR" id="P15630"/>
<dbReference type="KEGG" id="vg:912256"/>
<dbReference type="Proteomes" id="UP000001065">
    <property type="component" value="Genome"/>
</dbReference>
<reference key="1">
    <citation type="journal article" date="1989" name="Nucleic Acids Res.">
        <title>The complete sequence of soybean chlorotic mottle virus DNA and the identification of a novel promoter.</title>
        <authorList>
            <person name="Hasegawa A."/>
            <person name="Verver J."/>
            <person name="Shimada A."/>
            <person name="Saito M."/>
            <person name="Goldbach R."/>
            <person name="van Kammen A."/>
            <person name="Miki K."/>
            <person name="Kameya-Iwaki M."/>
            <person name="Hibi T."/>
        </authorList>
    </citation>
    <scope>NUCLEOTIDE SEQUENCE [GENOMIC DNA]</scope>
</reference>
<reference key="2">
    <citation type="submission" date="2000-11" db="EMBL/GenBank/DDBJ databases">
        <authorList>
            <person name="Hibi T."/>
        </authorList>
    </citation>
    <scope>SEQUENCE REVISION TO C-TERMINUS</scope>
</reference>
<gene>
    <name type="ORF">ORF II</name>
</gene>
<organism>
    <name type="scientific">Soybean chlorotic mottle virus</name>
    <dbReference type="NCBI Taxonomy" id="10651"/>
    <lineage>
        <taxon>Viruses</taxon>
        <taxon>Riboviria</taxon>
        <taxon>Pararnavirae</taxon>
        <taxon>Artverviricota</taxon>
        <taxon>Revtraviricetes</taxon>
        <taxon>Ortervirales</taxon>
        <taxon>Caulimoviridae</taxon>
        <taxon>Soymovirus</taxon>
        <taxon>Soymovirus maculaglycinis</taxon>
    </lineage>
</organism>
<accession>P15630</accession>
<organismHost>
    <name type="scientific">Glycine max</name>
    <name type="common">Soybean</name>
    <name type="synonym">Glycine hispida</name>
    <dbReference type="NCBI Taxonomy" id="3847"/>
</organismHost>
<organismHost>
    <name type="scientific">Lablab purpureus</name>
    <name type="common">Hyacinth bean</name>
    <name type="synonym">Dolichos lablab</name>
    <dbReference type="NCBI Taxonomy" id="35936"/>
</organismHost>
<organismHost>
    <name type="scientific">Phaseolus vulgaris</name>
    <name type="common">Kidney bean</name>
    <name type="synonym">French bean</name>
    <dbReference type="NCBI Taxonomy" id="3885"/>
</organismHost>
<organismHost>
    <name type="scientific">Vigna unguiculata</name>
    <name type="common">Cowpea</name>
    <dbReference type="NCBI Taxonomy" id="3917"/>
</organismHost>
<proteinExistence type="predicted"/>
<protein>
    <recommendedName>
        <fullName>Uncharacterized protein 2</fullName>
    </recommendedName>
</protein>
<feature type="chain" id="PRO_0000222084" description="Uncharacterized protein 2">
    <location>
        <begin position="1"/>
        <end position="201"/>
    </location>
</feature>